<organism>
    <name type="scientific">Escherichia coli (strain ATCC 8739 / DSM 1576 / NBRC 3972 / NCIMB 8545 / WDCM 00012 / Crooks)</name>
    <dbReference type="NCBI Taxonomy" id="481805"/>
    <lineage>
        <taxon>Bacteria</taxon>
        <taxon>Pseudomonadati</taxon>
        <taxon>Pseudomonadota</taxon>
        <taxon>Gammaproteobacteria</taxon>
        <taxon>Enterobacterales</taxon>
        <taxon>Enterobacteriaceae</taxon>
        <taxon>Escherichia</taxon>
    </lineage>
</organism>
<comment type="function">
    <text evidence="1">Binds to DNA and alters its conformation. May be involved in regulation of gene expression, nucleoid organization and DNA protection.</text>
</comment>
<comment type="subunit">
    <text evidence="1">Homodimer.</text>
</comment>
<comment type="subcellular location">
    <subcellularLocation>
        <location evidence="1">Cytoplasm</location>
        <location evidence="1">Nucleoid</location>
    </subcellularLocation>
</comment>
<comment type="similarity">
    <text evidence="1">Belongs to the YbaB/EbfC family.</text>
</comment>
<proteinExistence type="inferred from homology"/>
<keyword id="KW-0963">Cytoplasm</keyword>
<keyword id="KW-0238">DNA-binding</keyword>
<protein>
    <recommendedName>
        <fullName evidence="1">Nucleoid-associated protein YbaB</fullName>
    </recommendedName>
</protein>
<accession>B1IZC3</accession>
<sequence length="109" mass="12015">MFGKGGLGNLMKQAQQMQEKMQKMQEEIAQLEVTGESGAGLVKVTINGAHNCRRVEIDPSLLEDDKEMLEDLVAAAFNDAARRIEETQKEKMASVSSGMQLPPGFKMPF</sequence>
<reference key="1">
    <citation type="submission" date="2008-02" db="EMBL/GenBank/DDBJ databases">
        <title>Complete sequence of Escherichia coli C str. ATCC 8739.</title>
        <authorList>
            <person name="Copeland A."/>
            <person name="Lucas S."/>
            <person name="Lapidus A."/>
            <person name="Glavina del Rio T."/>
            <person name="Dalin E."/>
            <person name="Tice H."/>
            <person name="Bruce D."/>
            <person name="Goodwin L."/>
            <person name="Pitluck S."/>
            <person name="Kiss H."/>
            <person name="Brettin T."/>
            <person name="Detter J.C."/>
            <person name="Han C."/>
            <person name="Kuske C.R."/>
            <person name="Schmutz J."/>
            <person name="Larimer F."/>
            <person name="Land M."/>
            <person name="Hauser L."/>
            <person name="Kyrpides N."/>
            <person name="Mikhailova N."/>
            <person name="Ingram L."/>
            <person name="Richardson P."/>
        </authorList>
    </citation>
    <scope>NUCLEOTIDE SEQUENCE [LARGE SCALE GENOMIC DNA]</scope>
    <source>
        <strain>ATCC 8739 / DSM 1576 / NBRC 3972 / NCIMB 8545 / WDCM 00012 / Crooks</strain>
    </source>
</reference>
<gene>
    <name evidence="1" type="primary">ybaB</name>
    <name type="ordered locus">EcolC_3145</name>
</gene>
<evidence type="ECO:0000255" key="1">
    <source>
        <dbReference type="HAMAP-Rule" id="MF_00274"/>
    </source>
</evidence>
<feature type="chain" id="PRO_1000078757" description="Nucleoid-associated protein YbaB">
    <location>
        <begin position="1"/>
        <end position="109"/>
    </location>
</feature>
<dbReference type="EMBL" id="CP000946">
    <property type="protein sequence ID" value="ACA78768.1"/>
    <property type="molecule type" value="Genomic_DNA"/>
</dbReference>
<dbReference type="RefSeq" id="WP_000467098.1">
    <property type="nucleotide sequence ID" value="NZ_MTFT01000020.1"/>
</dbReference>
<dbReference type="SMR" id="B1IZC3"/>
<dbReference type="KEGG" id="ecl:EcolC_3145"/>
<dbReference type="HOGENOM" id="CLU_140930_0_0_6"/>
<dbReference type="GO" id="GO:0043590">
    <property type="term" value="C:bacterial nucleoid"/>
    <property type="evidence" value="ECO:0007669"/>
    <property type="project" value="UniProtKB-UniRule"/>
</dbReference>
<dbReference type="GO" id="GO:0005829">
    <property type="term" value="C:cytosol"/>
    <property type="evidence" value="ECO:0007669"/>
    <property type="project" value="TreeGrafter"/>
</dbReference>
<dbReference type="GO" id="GO:0003677">
    <property type="term" value="F:DNA binding"/>
    <property type="evidence" value="ECO:0007669"/>
    <property type="project" value="UniProtKB-UniRule"/>
</dbReference>
<dbReference type="FunFam" id="3.30.1310.10:FF:000001">
    <property type="entry name" value="Nucleoid-associated protein YbaB"/>
    <property type="match status" value="1"/>
</dbReference>
<dbReference type="Gene3D" id="3.30.1310.10">
    <property type="entry name" value="Nucleoid-associated protein YbaB-like domain"/>
    <property type="match status" value="1"/>
</dbReference>
<dbReference type="HAMAP" id="MF_00274">
    <property type="entry name" value="DNA_YbaB_EbfC"/>
    <property type="match status" value="1"/>
</dbReference>
<dbReference type="InterPro" id="IPR036894">
    <property type="entry name" value="YbaB-like_sf"/>
</dbReference>
<dbReference type="InterPro" id="IPR004401">
    <property type="entry name" value="YbaB/EbfC"/>
</dbReference>
<dbReference type="NCBIfam" id="TIGR00103">
    <property type="entry name" value="DNA_YbaB_EbfC"/>
    <property type="match status" value="1"/>
</dbReference>
<dbReference type="PANTHER" id="PTHR33449">
    <property type="entry name" value="NUCLEOID-ASSOCIATED PROTEIN YBAB"/>
    <property type="match status" value="1"/>
</dbReference>
<dbReference type="PANTHER" id="PTHR33449:SF1">
    <property type="entry name" value="NUCLEOID-ASSOCIATED PROTEIN YBAB"/>
    <property type="match status" value="1"/>
</dbReference>
<dbReference type="Pfam" id="PF02575">
    <property type="entry name" value="YbaB_DNA_bd"/>
    <property type="match status" value="1"/>
</dbReference>
<dbReference type="PIRSF" id="PIRSF004555">
    <property type="entry name" value="UCP004555"/>
    <property type="match status" value="1"/>
</dbReference>
<dbReference type="SUPFAM" id="SSF82607">
    <property type="entry name" value="YbaB-like"/>
    <property type="match status" value="1"/>
</dbReference>
<name>YBAB_ECOLC</name>